<keyword id="KW-0963">Cytoplasm</keyword>
<keyword id="KW-0539">Nucleus</keyword>
<keyword id="KW-0647">Proteasome</keyword>
<proteinExistence type="evidence at transcript level"/>
<sequence length="206" mass="22758">MAETTIGFRCQDFVLVAAAGLNAFYYIKITDTEDKITELDSHKVVACAGENGPRTHFVEYVKCNMALKKMREHGRMISTHATASFMRNTLAGALRSRDGLYPVNCLLAGFDVPASAEDDVATGAHLYYLDYLGTLQEVPYGCHGYGAPFVTAMLDRMWRPNLTAQEGVELMQKCCDEVNKRVVVSNNTFICKAVPKDGVERVQSVS</sequence>
<dbReference type="EMBL" id="AF226673">
    <property type="protein sequence ID" value="AAF37284.1"/>
    <property type="molecule type" value="mRNA"/>
</dbReference>
<dbReference type="SMR" id="Q9NHC6"/>
<dbReference type="BRENDA" id="3.4.25.1">
    <property type="organism ID" value="6519"/>
</dbReference>
<dbReference type="GO" id="GO:0005737">
    <property type="term" value="C:cytoplasm"/>
    <property type="evidence" value="ECO:0000314"/>
    <property type="project" value="GeneDB"/>
</dbReference>
<dbReference type="GO" id="GO:0005634">
    <property type="term" value="C:nucleus"/>
    <property type="evidence" value="ECO:0007669"/>
    <property type="project" value="UniProtKB-SubCell"/>
</dbReference>
<dbReference type="GO" id="GO:0019774">
    <property type="term" value="C:proteasome core complex, beta-subunit complex"/>
    <property type="evidence" value="ECO:0000250"/>
    <property type="project" value="UniProtKB"/>
</dbReference>
<dbReference type="GO" id="GO:0004175">
    <property type="term" value="F:endopeptidase activity"/>
    <property type="evidence" value="ECO:0000304"/>
    <property type="project" value="GeneDB"/>
</dbReference>
<dbReference type="GO" id="GO:0010498">
    <property type="term" value="P:proteasomal protein catabolic process"/>
    <property type="evidence" value="ECO:0007669"/>
    <property type="project" value="InterPro"/>
</dbReference>
<dbReference type="GO" id="GO:0006511">
    <property type="term" value="P:ubiquitin-dependent protein catabolic process"/>
    <property type="evidence" value="ECO:0000255"/>
    <property type="project" value="GeneDB"/>
</dbReference>
<dbReference type="CDD" id="cd03758">
    <property type="entry name" value="proteasome_beta_type_2"/>
    <property type="match status" value="1"/>
</dbReference>
<dbReference type="FunFam" id="3.60.20.10:FF:000100">
    <property type="entry name" value="Proteasome subunit beta"/>
    <property type="match status" value="1"/>
</dbReference>
<dbReference type="Gene3D" id="3.60.20.10">
    <property type="entry name" value="Glutamine Phosphoribosylpyrophosphate, subunit 1, domain 1"/>
    <property type="match status" value="1"/>
</dbReference>
<dbReference type="InterPro" id="IPR029055">
    <property type="entry name" value="Ntn_hydrolases_N"/>
</dbReference>
<dbReference type="InterPro" id="IPR035206">
    <property type="entry name" value="Proteasome_beta2"/>
</dbReference>
<dbReference type="InterPro" id="IPR001353">
    <property type="entry name" value="Proteasome_sua/b"/>
</dbReference>
<dbReference type="InterPro" id="IPR023333">
    <property type="entry name" value="Proteasome_suB-type"/>
</dbReference>
<dbReference type="PANTHER" id="PTHR32194">
    <property type="entry name" value="METALLOPROTEASE TLDD"/>
    <property type="match status" value="1"/>
</dbReference>
<dbReference type="PANTHER" id="PTHR32194:SF2">
    <property type="entry name" value="PROTEASOME SUBUNIT BETA TYPE-1"/>
    <property type="match status" value="1"/>
</dbReference>
<dbReference type="Pfam" id="PF00227">
    <property type="entry name" value="Proteasome"/>
    <property type="match status" value="1"/>
</dbReference>
<dbReference type="SUPFAM" id="SSF56235">
    <property type="entry name" value="N-terminal nucleophile aminohydrolases (Ntn hydrolases)"/>
    <property type="match status" value="1"/>
</dbReference>
<dbReference type="PROSITE" id="PS51476">
    <property type="entry name" value="PROTEASOME_BETA_2"/>
    <property type="match status" value="1"/>
</dbReference>
<comment type="function">
    <text evidence="1">Non-catalytic component of the proteasome, a multicatalytic proteinase complex which is characterized by its ability to cleave peptides with Arg, Phe, Tyr, Leu, and Glu adjacent to the leaving group at neutral or slightly basic pH. The proteasome has an ATP-dependent proteolytic activity (By similarity).</text>
</comment>
<comment type="subunit">
    <text evidence="1">The 26S proteasome consists of a 20S proteasome core and two 19S regulatory subunits. The 20S proteasome core is composed of 28 subunits that are arranged in four stacked rings, resulting in a barrel-shaped structure. The two end rings are each formed by seven alpha subunits, and the two central rings are each formed by seven beta subunits. The catalytic chamber with the active sites is on the inside of the barrel (By similarity).</text>
</comment>
<comment type="subcellular location">
    <subcellularLocation>
        <location evidence="2">Cytoplasm</location>
    </subcellularLocation>
    <subcellularLocation>
        <location evidence="1">Nucleus</location>
    </subcellularLocation>
</comment>
<comment type="similarity">
    <text evidence="2">Belongs to the peptidase T1B family.</text>
</comment>
<name>PSB2_TRYBB</name>
<reference key="1">
    <citation type="journal article" date="2001" name="J. Biol. Chem.">
        <title>Functional assignment of the 20 S proteasome from Trypanosoma brucei using mass spectrometry and new bioinformatics approaches.</title>
        <authorList>
            <person name="Huang L."/>
            <person name="Jacob R.J."/>
            <person name="Pegg S.C.H."/>
            <person name="Baldwin M.A."/>
            <person name="Wang C.C."/>
            <person name="Burlingame A.L."/>
            <person name="Babbitt P.C."/>
        </authorList>
    </citation>
    <scope>NUCLEOTIDE SEQUENCE [MRNA]</scope>
    <source>
        <strain>427</strain>
    </source>
</reference>
<organism>
    <name type="scientific">Trypanosoma brucei brucei</name>
    <dbReference type="NCBI Taxonomy" id="5702"/>
    <lineage>
        <taxon>Eukaryota</taxon>
        <taxon>Discoba</taxon>
        <taxon>Euglenozoa</taxon>
        <taxon>Kinetoplastea</taxon>
        <taxon>Metakinetoplastina</taxon>
        <taxon>Trypanosomatida</taxon>
        <taxon>Trypanosomatidae</taxon>
        <taxon>Trypanosoma</taxon>
    </lineage>
</organism>
<gene>
    <name type="primary">PSB4</name>
</gene>
<evidence type="ECO:0000250" key="1"/>
<evidence type="ECO:0000255" key="2">
    <source>
        <dbReference type="PROSITE-ProRule" id="PRU00809"/>
    </source>
</evidence>
<feature type="chain" id="PRO_0000148048" description="Proteasome subunit beta type-2">
    <location>
        <begin position="1"/>
        <end position="206"/>
    </location>
</feature>
<protein>
    <recommendedName>
        <fullName>Proteasome subunit beta type-2</fullName>
    </recommendedName>
    <alternativeName>
        <fullName>20S proteasome subunit beta-4</fullName>
    </alternativeName>
</protein>
<accession>Q9NHC6</accession>